<proteinExistence type="evidence at transcript level"/>
<dbReference type="EMBL" id="CP017625">
    <property type="protein sequence ID" value="AOW28685.1"/>
    <property type="molecule type" value="Genomic_DNA"/>
</dbReference>
<dbReference type="RefSeq" id="XP_719917.1">
    <property type="nucleotide sequence ID" value="XM_714824.1"/>
</dbReference>
<dbReference type="STRING" id="237561.Q5ADL8"/>
<dbReference type="EnsemblFungi" id="C3_06790W_A-T">
    <property type="protein sequence ID" value="C3_06790W_A-T-p1"/>
    <property type="gene ID" value="C3_06790W_A"/>
</dbReference>
<dbReference type="GeneID" id="3638499"/>
<dbReference type="KEGG" id="cal:CAALFM_C306790WA"/>
<dbReference type="CGD" id="CAL0000178438">
    <property type="gene designation" value="TRY6"/>
</dbReference>
<dbReference type="VEuPathDB" id="FungiDB:C3_06790W_A"/>
<dbReference type="HOGENOM" id="CLU_033003_0_0_1"/>
<dbReference type="InParanoid" id="Q5ADL8"/>
<dbReference type="OMA" id="EMNETEN"/>
<dbReference type="OrthoDB" id="690068at2759"/>
<dbReference type="PRO" id="PR:Q5ADL8"/>
<dbReference type="Proteomes" id="UP000000559">
    <property type="component" value="Chromosome 3"/>
</dbReference>
<dbReference type="GO" id="GO:0005634">
    <property type="term" value="C:nucleus"/>
    <property type="evidence" value="ECO:0007669"/>
    <property type="project" value="UniProtKB-SubCell"/>
</dbReference>
<dbReference type="GO" id="GO:0046983">
    <property type="term" value="F:protein dimerization activity"/>
    <property type="evidence" value="ECO:0007669"/>
    <property type="project" value="InterPro"/>
</dbReference>
<dbReference type="GO" id="GO:0007155">
    <property type="term" value="P:cell adhesion"/>
    <property type="evidence" value="ECO:0007669"/>
    <property type="project" value="UniProtKB-KW"/>
</dbReference>
<dbReference type="GO" id="GO:1900189">
    <property type="term" value="P:positive regulation of cell adhesion involved in single-species biofilm formation"/>
    <property type="evidence" value="ECO:0000315"/>
    <property type="project" value="CGD"/>
</dbReference>
<dbReference type="GO" id="GO:0010811">
    <property type="term" value="P:positive regulation of cell-substrate adhesion"/>
    <property type="evidence" value="ECO:0000315"/>
    <property type="project" value="CGD"/>
</dbReference>
<dbReference type="GO" id="GO:0006357">
    <property type="term" value="P:regulation of transcription by RNA polymerase II"/>
    <property type="evidence" value="ECO:0000315"/>
    <property type="project" value="CGD"/>
</dbReference>
<dbReference type="GO" id="GO:0044011">
    <property type="term" value="P:single-species biofilm formation on inanimate substrate"/>
    <property type="evidence" value="ECO:0000315"/>
    <property type="project" value="CGD"/>
</dbReference>
<dbReference type="FunFam" id="4.10.280.10:FF:000186">
    <property type="entry name" value="Transcriptional regulator of yeast form adherence 6"/>
    <property type="match status" value="1"/>
</dbReference>
<dbReference type="Gene3D" id="4.10.280.10">
    <property type="entry name" value="Helix-loop-helix DNA-binding domain"/>
    <property type="match status" value="1"/>
</dbReference>
<dbReference type="InterPro" id="IPR011598">
    <property type="entry name" value="bHLH_dom"/>
</dbReference>
<dbReference type="InterPro" id="IPR036638">
    <property type="entry name" value="HLH_DNA-bd_sf"/>
</dbReference>
<dbReference type="InterPro" id="IPR051732">
    <property type="entry name" value="USF"/>
</dbReference>
<dbReference type="PANTHER" id="PTHR46117">
    <property type="entry name" value="FI24210P1"/>
    <property type="match status" value="1"/>
</dbReference>
<dbReference type="PANTHER" id="PTHR46117:SF3">
    <property type="entry name" value="FI24210P1"/>
    <property type="match status" value="1"/>
</dbReference>
<dbReference type="Pfam" id="PF00010">
    <property type="entry name" value="HLH"/>
    <property type="match status" value="1"/>
</dbReference>
<dbReference type="SMART" id="SM00353">
    <property type="entry name" value="HLH"/>
    <property type="match status" value="1"/>
</dbReference>
<dbReference type="SUPFAM" id="SSF47459">
    <property type="entry name" value="HLH, helix-loop-helix DNA-binding domain"/>
    <property type="match status" value="1"/>
</dbReference>
<dbReference type="PROSITE" id="PS50888">
    <property type="entry name" value="BHLH"/>
    <property type="match status" value="1"/>
</dbReference>
<evidence type="ECO:0000255" key="1">
    <source>
        <dbReference type="PROSITE-ProRule" id="PRU00981"/>
    </source>
</evidence>
<evidence type="ECO:0000256" key="2">
    <source>
        <dbReference type="SAM" id="MobiDB-lite"/>
    </source>
</evidence>
<evidence type="ECO:0000269" key="3">
    <source>
    </source>
</evidence>
<evidence type="ECO:0000269" key="4">
    <source>
    </source>
</evidence>
<evidence type="ECO:0000269" key="5">
    <source>
    </source>
</evidence>
<evidence type="ECO:0000269" key="6">
    <source>
    </source>
</evidence>
<evidence type="ECO:0000305" key="7"/>
<protein>
    <recommendedName>
        <fullName>Transcriptional regulator of yeast form adherence 6</fullName>
    </recommendedName>
</protein>
<accession>Q5ADL8</accession>
<accession>A0A1D8PKL6</accession>
<comment type="function">
    <text evidence="6">Transcription factor required for yeast cell adherence to silicone substrate.</text>
</comment>
<comment type="subcellular location">
    <subcellularLocation>
        <location evidence="7">Nucleus</location>
    </subcellularLocation>
</comment>
<comment type="induction">
    <text evidence="3 4 5">Expression is induced in biofilm and repressed by alpha pheromone.</text>
</comment>
<comment type="disruption phenotype">
    <text evidence="6">Decreases cell adherence to silicone substrate.</text>
</comment>
<feature type="chain" id="PRO_0000426068" description="Transcriptional regulator of yeast form adherence 6">
    <location>
        <begin position="1"/>
        <end position="467"/>
    </location>
</feature>
<feature type="domain" description="bHLH" evidence="1">
    <location>
        <begin position="92"/>
        <end position="173"/>
    </location>
</feature>
<feature type="region of interest" description="Disordered" evidence="2">
    <location>
        <begin position="43"/>
        <end position="83"/>
    </location>
</feature>
<feature type="region of interest" description="Disordered" evidence="2">
    <location>
        <begin position="128"/>
        <end position="149"/>
    </location>
</feature>
<feature type="region of interest" description="Disordered" evidence="2">
    <location>
        <begin position="245"/>
        <end position="275"/>
    </location>
</feature>
<feature type="region of interest" description="Disordered" evidence="2">
    <location>
        <begin position="312"/>
        <end position="365"/>
    </location>
</feature>
<feature type="region of interest" description="Disordered" evidence="2">
    <location>
        <begin position="390"/>
        <end position="439"/>
    </location>
</feature>
<feature type="compositionally biased region" description="Polar residues" evidence="2">
    <location>
        <begin position="43"/>
        <end position="52"/>
    </location>
</feature>
<feature type="compositionally biased region" description="Low complexity" evidence="2">
    <location>
        <begin position="257"/>
        <end position="275"/>
    </location>
</feature>
<feature type="compositionally biased region" description="Low complexity" evidence="2">
    <location>
        <begin position="312"/>
        <end position="322"/>
    </location>
</feature>
<feature type="compositionally biased region" description="Polar residues" evidence="2">
    <location>
        <begin position="323"/>
        <end position="338"/>
    </location>
</feature>
<feature type="compositionally biased region" description="Low complexity" evidence="2">
    <location>
        <begin position="345"/>
        <end position="365"/>
    </location>
</feature>
<feature type="compositionally biased region" description="Polar residues" evidence="2">
    <location>
        <begin position="417"/>
        <end position="432"/>
    </location>
</feature>
<name>TRY6_CANAL</name>
<organism>
    <name type="scientific">Candida albicans (strain SC5314 / ATCC MYA-2876)</name>
    <name type="common">Yeast</name>
    <dbReference type="NCBI Taxonomy" id="237561"/>
    <lineage>
        <taxon>Eukaryota</taxon>
        <taxon>Fungi</taxon>
        <taxon>Dikarya</taxon>
        <taxon>Ascomycota</taxon>
        <taxon>Saccharomycotina</taxon>
        <taxon>Pichiomycetes</taxon>
        <taxon>Debaryomycetaceae</taxon>
        <taxon>Candida/Lodderomyces clade</taxon>
        <taxon>Candida</taxon>
    </lineage>
</organism>
<keyword id="KW-0130">Cell adhesion</keyword>
<keyword id="KW-0539">Nucleus</keyword>
<keyword id="KW-1185">Reference proteome</keyword>
<keyword id="KW-0804">Transcription</keyword>
<keyword id="KW-0805">Transcription regulation</keyword>
<gene>
    <name type="primary">TRY6</name>
    <name type="ordered locus">CAALFM_C306790WA</name>
    <name type="ORF">CaO19.14116</name>
    <name type="ORF">CaO19.6824</name>
</gene>
<reference key="1">
    <citation type="journal article" date="2004" name="Proc. Natl. Acad. Sci. U.S.A.">
        <title>The diploid genome sequence of Candida albicans.</title>
        <authorList>
            <person name="Jones T."/>
            <person name="Federspiel N.A."/>
            <person name="Chibana H."/>
            <person name="Dungan J."/>
            <person name="Kalman S."/>
            <person name="Magee B.B."/>
            <person name="Newport G."/>
            <person name="Thorstenson Y.R."/>
            <person name="Agabian N."/>
            <person name="Magee P.T."/>
            <person name="Davis R.W."/>
            <person name="Scherer S."/>
        </authorList>
    </citation>
    <scope>NUCLEOTIDE SEQUENCE [LARGE SCALE GENOMIC DNA]</scope>
    <source>
        <strain>SC5314 / ATCC MYA-2876</strain>
    </source>
</reference>
<reference key="2">
    <citation type="journal article" date="2007" name="Genome Biol.">
        <title>Assembly of the Candida albicans genome into sixteen supercontigs aligned on the eight chromosomes.</title>
        <authorList>
            <person name="van het Hoog M."/>
            <person name="Rast T.J."/>
            <person name="Martchenko M."/>
            <person name="Grindle S."/>
            <person name="Dignard D."/>
            <person name="Hogues H."/>
            <person name="Cuomo C."/>
            <person name="Berriman M."/>
            <person name="Scherer S."/>
            <person name="Magee B.B."/>
            <person name="Whiteway M."/>
            <person name="Chibana H."/>
            <person name="Nantel A."/>
            <person name="Magee P.T."/>
        </authorList>
    </citation>
    <scope>GENOME REANNOTATION</scope>
    <source>
        <strain>SC5314 / ATCC MYA-2876</strain>
    </source>
</reference>
<reference key="3">
    <citation type="journal article" date="2013" name="Genome Biol.">
        <title>Assembly of a phased diploid Candida albicans genome facilitates allele-specific measurements and provides a simple model for repeat and indel structure.</title>
        <authorList>
            <person name="Muzzey D."/>
            <person name="Schwartz K."/>
            <person name="Weissman J.S."/>
            <person name="Sherlock G."/>
        </authorList>
    </citation>
    <scope>NUCLEOTIDE SEQUENCE [LARGE SCALE GENOMIC DNA]</scope>
    <scope>GENOME REANNOTATION</scope>
    <source>
        <strain>SC5314 / ATCC MYA-2876</strain>
    </source>
</reference>
<reference key="4">
    <citation type="journal article" date="2005" name="Eukaryot. Cell">
        <title>Genome-wide transcription profiling of the early phase of biofilm formation by Candida albicans.</title>
        <authorList>
            <person name="Murillo L.A."/>
            <person name="Newport G."/>
            <person name="Lan C.Y."/>
            <person name="Habelitz S."/>
            <person name="Dungan J."/>
            <person name="Agabian N.M."/>
        </authorList>
    </citation>
    <scope>INDUCTION</scope>
</reference>
<reference key="5">
    <citation type="journal article" date="2006" name="Mol. Microbiol.">
        <title>The role of nutrient regulation and the Gpa2 protein in the mating pheromone response of C. albicans.</title>
        <authorList>
            <person name="Bennett R.J."/>
            <person name="Johnson A.D."/>
        </authorList>
    </citation>
    <scope>INDUCTION</scope>
</reference>
<reference key="6">
    <citation type="journal article" date="2012" name="Cell">
        <title>A recently evolved transcriptional network controls biofilm development in Candida albicans.</title>
        <authorList>
            <person name="Nobile C.J."/>
            <person name="Fox E.P."/>
            <person name="Nett J.E."/>
            <person name="Sorrells T.R."/>
            <person name="Mitrovich Q.M."/>
            <person name="Hernday A.D."/>
            <person name="Tuch B.B."/>
            <person name="Andes D.R."/>
            <person name="Johnson A.D."/>
        </authorList>
    </citation>
    <scope>INDUCTION</scope>
</reference>
<reference key="7">
    <citation type="journal article" date="2012" name="PLoS Pathog.">
        <title>Portrait of Candida albicans adherence regulators.</title>
        <authorList>
            <person name="Finkel J.S."/>
            <person name="Xu W."/>
            <person name="Huang D."/>
            <person name="Hill E.M."/>
            <person name="Desai J.V."/>
            <person name="Woolford C.A."/>
            <person name="Nett J.E."/>
            <person name="Taff H."/>
            <person name="Norice C.T."/>
            <person name="Andes D.R."/>
            <person name="Lanni F."/>
            <person name="Mitchell A.P."/>
        </authorList>
    </citation>
    <scope>FUNCTION</scope>
    <scope>DISRUPTION PHENOTYPE</scope>
</reference>
<sequence>MSLPSPPVLKTTIIQLNKELDPEDDNNNYEILTNDYNNYGSSNTSDAGSIPTSPIIEVSGTTKSGSGLPNKKKRRRSTANIDSEELAKRKNETKQLHSIIEKRRRIKINREFEALKYLIPACRNCNTGSSGGSATPTSSTKKASTNSNNNGNKIDGMYKLTILKSSVEYILYLHHIIQKQHQLLSSISAKDTNGGILAEKLKAFEDFDIDFAKVPLNVNQYRNIDKDFNFKDLMQDLDGRSVNTESPETIIEENEPVSETSSTNNTTTLHYSNSSVLPSRTSSIVSSRQSSSLPTPELTPILSILNKYSTSNNQLNNRKNSNPISPQTVCIKSQNPSPFTMPMKSSLSTSIVNSPSSSSSLSGSKSYMAGNNAVNTVKFSLPDPVVNPNSTLNDNIPRKGLISGIPEEEEEEKINKGSANTETVNSGSASSDENNDNDRGVLLKLTDQDVSKTLLALRKSSIDSLLN</sequence>